<dbReference type="EMBL" id="CY015082">
    <property type="protein sequence ID" value="ABI85107.1"/>
    <property type="molecule type" value="Genomic_RNA"/>
</dbReference>
<dbReference type="SMR" id="Q0A2H4"/>
<dbReference type="Proteomes" id="UP000169634">
    <property type="component" value="Genome"/>
</dbReference>
<dbReference type="GO" id="GO:0042025">
    <property type="term" value="C:host cell nucleus"/>
    <property type="evidence" value="ECO:0007669"/>
    <property type="project" value="UniProtKB-SubCell"/>
</dbReference>
<dbReference type="GO" id="GO:0016020">
    <property type="term" value="C:membrane"/>
    <property type="evidence" value="ECO:0007669"/>
    <property type="project" value="UniProtKB-KW"/>
</dbReference>
<dbReference type="GO" id="GO:0055036">
    <property type="term" value="C:virion membrane"/>
    <property type="evidence" value="ECO:0007669"/>
    <property type="project" value="UniProtKB-SubCell"/>
</dbReference>
<dbReference type="GO" id="GO:0003723">
    <property type="term" value="F:RNA binding"/>
    <property type="evidence" value="ECO:0007669"/>
    <property type="project" value="UniProtKB-UniRule"/>
</dbReference>
<dbReference type="GO" id="GO:0039660">
    <property type="term" value="F:structural constituent of virion"/>
    <property type="evidence" value="ECO:0007669"/>
    <property type="project" value="UniProtKB-UniRule"/>
</dbReference>
<dbReference type="GO" id="GO:0046761">
    <property type="term" value="P:viral budding from plasma membrane"/>
    <property type="evidence" value="ECO:0007669"/>
    <property type="project" value="UniProtKB-UniRule"/>
</dbReference>
<dbReference type="FunFam" id="1.10.10.180:FF:000001">
    <property type="entry name" value="Matrix protein 1"/>
    <property type="match status" value="1"/>
</dbReference>
<dbReference type="FunFam" id="1.20.91.10:FF:000001">
    <property type="entry name" value="Matrix protein 1"/>
    <property type="match status" value="1"/>
</dbReference>
<dbReference type="Gene3D" id="1.10.10.180">
    <property type="match status" value="1"/>
</dbReference>
<dbReference type="Gene3D" id="1.20.91.10">
    <property type="match status" value="1"/>
</dbReference>
<dbReference type="HAMAP" id="MF_04068">
    <property type="entry name" value="INFV_M1"/>
    <property type="match status" value="1"/>
</dbReference>
<dbReference type="InterPro" id="IPR036039">
    <property type="entry name" value="Flu_matrix_M1"/>
</dbReference>
<dbReference type="InterPro" id="IPR013188">
    <property type="entry name" value="Flu_matrix_M1_C"/>
</dbReference>
<dbReference type="InterPro" id="IPR001561">
    <property type="entry name" value="Flu_matrix_M1_N"/>
</dbReference>
<dbReference type="InterPro" id="IPR015423">
    <property type="entry name" value="Flu_matrix_M1_N_sub1"/>
</dbReference>
<dbReference type="InterPro" id="IPR015799">
    <property type="entry name" value="Flu_matrix_M1_N_sub2"/>
</dbReference>
<dbReference type="InterPro" id="IPR037533">
    <property type="entry name" value="INFV_M1"/>
</dbReference>
<dbReference type="Pfam" id="PF00598">
    <property type="entry name" value="Flu_M1"/>
    <property type="match status" value="1"/>
</dbReference>
<dbReference type="Pfam" id="PF08289">
    <property type="entry name" value="Flu_M1_C"/>
    <property type="match status" value="1"/>
</dbReference>
<dbReference type="SMART" id="SM00759">
    <property type="entry name" value="Flu_M1_C"/>
    <property type="match status" value="1"/>
</dbReference>
<dbReference type="SUPFAM" id="SSF48145">
    <property type="entry name" value="Influenza virus matrix protein M1"/>
    <property type="match status" value="1"/>
</dbReference>
<organismHost>
    <name type="scientific">Aves</name>
    <dbReference type="NCBI Taxonomy" id="8782"/>
</organismHost>
<organismHost>
    <name type="scientific">Felis catus</name>
    <name type="common">Cat</name>
    <name type="synonym">Felis silvestris catus</name>
    <dbReference type="NCBI Taxonomy" id="9685"/>
</organismHost>
<organismHost>
    <name type="scientific">Homo sapiens</name>
    <name type="common">Human</name>
    <dbReference type="NCBI Taxonomy" id="9606"/>
</organismHost>
<organismHost>
    <name type="scientific">Panthera pardus</name>
    <name type="common">Leopard</name>
    <name type="synonym">Felis pardus</name>
    <dbReference type="NCBI Taxonomy" id="9691"/>
</organismHost>
<organismHost>
    <name type="scientific">Panthera tigris</name>
    <name type="common">Tiger</name>
    <dbReference type="NCBI Taxonomy" id="9694"/>
</organismHost>
<organismHost>
    <name type="scientific">Sus scrofa</name>
    <name type="common">Pig</name>
    <dbReference type="NCBI Taxonomy" id="9823"/>
</organismHost>
<proteinExistence type="inferred from homology"/>
<feature type="chain" id="PRO_0000309847" description="Matrix protein 1">
    <location>
        <begin position="1"/>
        <end position="252"/>
    </location>
</feature>
<feature type="region of interest" description="Membrane-binding" evidence="1">
    <location>
        <begin position="1"/>
        <end position="164"/>
    </location>
</feature>
<feature type="region of interest" description="RNP-binding" evidence="1">
    <location>
        <begin position="165"/>
        <end position="252"/>
    </location>
</feature>
<feature type="short sequence motif" description="Nuclear localization signal" evidence="1">
    <location>
        <begin position="101"/>
        <end position="105"/>
    </location>
</feature>
<keyword id="KW-0025">Alternative splicing</keyword>
<keyword id="KW-1048">Host nucleus</keyword>
<keyword id="KW-0472">Membrane</keyword>
<keyword id="KW-0694">RNA-binding</keyword>
<keyword id="KW-0468">Viral matrix protein</keyword>
<keyword id="KW-0946">Virion</keyword>
<sequence>MSLLTEVETYVLSIVPSGPLKAEIAQRLEDVFAGKNTDLEALMEWLKTRPILSPLTKGILGFVFTLTVPSERGLQRRRFVQNALNGNGDPNNMDRAVKLYKKLKREITFHGAKEVALSYSTGALASCMGLIYNRMGTVTTEVAFGLVCATCEQIADSQHRSHRQMVTTTNPLIRHENRMVLASTTAKAMEQMAGSSEQAAEAMEVASQARQMVQAMRTIGTHPSSSAGLKDDLLENLQAYQKRMGVQMQRFK</sequence>
<evidence type="ECO:0000255" key="1">
    <source>
        <dbReference type="HAMAP-Rule" id="MF_04068"/>
    </source>
</evidence>
<gene>
    <name evidence="1" type="primary">M</name>
</gene>
<protein>
    <recommendedName>
        <fullName evidence="1">Matrix protein 1</fullName>
        <shortName evidence="1">M1</shortName>
    </recommendedName>
</protein>
<reference key="1">
    <citation type="journal article" date="2006" name="Science">
        <title>Large-scale sequence analysis of avian influenza isolates.</title>
        <authorList>
            <person name="Obenauer J.C."/>
            <person name="Denson J."/>
            <person name="Mehta P.K."/>
            <person name="Su X."/>
            <person name="Mukatira S."/>
            <person name="Finkelstein D.B."/>
            <person name="Xu X."/>
            <person name="Wang J."/>
            <person name="Ma J."/>
            <person name="Fan Y."/>
            <person name="Rakestraw K.M."/>
            <person name="Webster R.G."/>
            <person name="Hoffmann E."/>
            <person name="Krauss S."/>
            <person name="Zheng J."/>
            <person name="Zhang Z."/>
            <person name="Naeve C.W."/>
        </authorList>
    </citation>
    <scope>NUCLEOTIDE SEQUENCE [GENOMIC RNA]</scope>
</reference>
<comment type="function">
    <text evidence="1">Plays critical roles in virus replication, from virus entry and uncoating to assembly and budding of the virus particle. M1 binding to ribonucleocapsids (RNPs) in nucleus seems to inhibit viral transcription. Interaction of viral NEP with M1-RNP is thought to promote nuclear export of the complex, which is targeted to the virion assembly site at the apical plasma membrane in polarized epithelial cells. Interactions with NA and HA may bring M1, a non-raft-associated protein, into lipid rafts. Forms a continuous shell on the inner side of the lipid bilayer in virion, where it binds the RNP. During virus entry into cell, the M2 ion channel acidifies the internal virion core, inducing M1 dissociation from the RNP. M1-free RNPs are transported to the nucleus, where viral transcription and replication can take place.</text>
</comment>
<comment type="function">
    <text evidence="1">Determines the virion's shape: spherical or filamentous. Clinical isolates of influenza are characterized by the presence of significant proportion of filamentous virions, whereas after multiple passage on eggs or cell culture, virions have only spherical morphology. Filamentous virions are thought to be important to infect neighboring cells, and spherical virions more suited to spread through aerosol between hosts organisms.</text>
</comment>
<comment type="subunit">
    <text evidence="1">Homodimer and homomultimer. Interacts with NEP. Binds ribonucleocapsid by both interacting with genomic RNA and NP protein. May interact with HA and NA. Cannot bind NP without genomic RNA.</text>
</comment>
<comment type="subcellular location">
    <subcellularLocation>
        <location evidence="1">Virion membrane</location>
        <topology evidence="1">Peripheral membrane protein</topology>
        <orientation evidence="1">Cytoplasmic side</orientation>
    </subcellularLocation>
    <subcellularLocation>
        <location evidence="1">Host nucleus</location>
    </subcellularLocation>
</comment>
<comment type="alternative products">
    <event type="alternative splicing"/>
    <isoform>
        <id>Q0A2H4-1</id>
        <name>M1</name>
        <sequence type="displayed"/>
    </isoform>
    <isoform>
        <id>Q0A2H5-1</id>
        <name>M2</name>
        <sequence type="external"/>
    </isoform>
    <text>Only the first 9 residues are shared by the 2 isoforms.</text>
</comment>
<comment type="miscellaneous">
    <text evidence="1">Most abundant protein in virion. When expressed alone can form virus-like particles in transfected cells.</text>
</comment>
<comment type="similarity">
    <text evidence="1">Belongs to the influenza viruses Matrix protein M1 family.</text>
</comment>
<accession>Q0A2H4</accession>
<organism>
    <name type="scientific">Influenza A virus (strain A/Chicken/Scotland/1959 H5N1)</name>
    <dbReference type="NCBI Taxonomy" id="402527"/>
    <lineage>
        <taxon>Viruses</taxon>
        <taxon>Riboviria</taxon>
        <taxon>Orthornavirae</taxon>
        <taxon>Negarnaviricota</taxon>
        <taxon>Polyploviricotina</taxon>
        <taxon>Insthoviricetes</taxon>
        <taxon>Articulavirales</taxon>
        <taxon>Orthomyxoviridae</taxon>
        <taxon>Alphainfluenzavirus</taxon>
        <taxon>Alphainfluenzavirus influenzae</taxon>
        <taxon>Influenza A virus</taxon>
    </lineage>
</organism>
<name>M1_I59A0</name>